<accession>Q2J1K3</accession>
<evidence type="ECO:0000255" key="1">
    <source>
        <dbReference type="HAMAP-Rule" id="MF_01855"/>
    </source>
</evidence>
<keyword id="KW-0113">Calvin cycle</keyword>
<keyword id="KW-0119">Carbohydrate metabolism</keyword>
<keyword id="KW-0963">Cytoplasm</keyword>
<keyword id="KW-0378">Hydrolase</keyword>
<keyword id="KW-0460">Magnesium</keyword>
<keyword id="KW-0479">Metal-binding</keyword>
<keyword id="KW-1185">Reference proteome</keyword>
<name>F16PA_RHOP2</name>
<comment type="catalytic activity">
    <reaction evidence="1">
        <text>beta-D-fructose 1,6-bisphosphate + H2O = beta-D-fructose 6-phosphate + phosphate</text>
        <dbReference type="Rhea" id="RHEA:11064"/>
        <dbReference type="ChEBI" id="CHEBI:15377"/>
        <dbReference type="ChEBI" id="CHEBI:32966"/>
        <dbReference type="ChEBI" id="CHEBI:43474"/>
        <dbReference type="ChEBI" id="CHEBI:57634"/>
        <dbReference type="EC" id="3.1.3.11"/>
    </reaction>
</comment>
<comment type="cofactor">
    <cofactor evidence="1">
        <name>Mg(2+)</name>
        <dbReference type="ChEBI" id="CHEBI:18420"/>
    </cofactor>
    <text evidence="1">Binds 2 magnesium ions per subunit.</text>
</comment>
<comment type="pathway">
    <text evidence="1">Carbohydrate biosynthesis; Calvin cycle.</text>
</comment>
<comment type="subunit">
    <text evidence="1">Homotetramer.</text>
</comment>
<comment type="subcellular location">
    <subcellularLocation>
        <location evidence="1">Cytoplasm</location>
    </subcellularLocation>
</comment>
<comment type="similarity">
    <text evidence="1">Belongs to the FBPase class 1 family.</text>
</comment>
<feature type="chain" id="PRO_0000364678" description="Fructose-1,6-bisphosphatase class 1">
    <location>
        <begin position="1"/>
        <end position="343"/>
    </location>
</feature>
<feature type="binding site" evidence="1">
    <location>
        <position position="90"/>
    </location>
    <ligand>
        <name>Mg(2+)</name>
        <dbReference type="ChEBI" id="CHEBI:18420"/>
        <label>1</label>
    </ligand>
</feature>
<feature type="binding site" evidence="1">
    <location>
        <position position="109"/>
    </location>
    <ligand>
        <name>Mg(2+)</name>
        <dbReference type="ChEBI" id="CHEBI:18420"/>
        <label>1</label>
    </ligand>
</feature>
<feature type="binding site" evidence="1">
    <location>
        <position position="109"/>
    </location>
    <ligand>
        <name>Mg(2+)</name>
        <dbReference type="ChEBI" id="CHEBI:18420"/>
        <label>2</label>
    </ligand>
</feature>
<feature type="binding site" evidence="1">
    <location>
        <position position="111"/>
    </location>
    <ligand>
        <name>Mg(2+)</name>
        <dbReference type="ChEBI" id="CHEBI:18420"/>
        <label>1</label>
    </ligand>
</feature>
<feature type="binding site" evidence="1">
    <location>
        <begin position="112"/>
        <end position="115"/>
    </location>
    <ligand>
        <name>substrate</name>
    </ligand>
</feature>
<feature type="binding site" evidence="1">
    <location>
        <position position="112"/>
    </location>
    <ligand>
        <name>Mg(2+)</name>
        <dbReference type="ChEBI" id="CHEBI:18420"/>
        <label>2</label>
    </ligand>
</feature>
<feature type="binding site" evidence="1">
    <location>
        <position position="199"/>
    </location>
    <ligand>
        <name>substrate</name>
    </ligand>
</feature>
<feature type="binding site" evidence="1">
    <location>
        <position position="271"/>
    </location>
    <ligand>
        <name>Mg(2+)</name>
        <dbReference type="ChEBI" id="CHEBI:18420"/>
        <label>2</label>
    </ligand>
</feature>
<proteinExistence type="inferred from homology"/>
<sequence length="343" mass="36410">MDQGQTLSRLLDSYGTDARTRAVAAAVGAIAEASIEISDLIGQGALAGITGAAHGASNADGDVQKDLDVRAEAAIVAALKNVPYAALASEESDTLLMGDPQAPISIAYDPLDGSSNIDTNMTVGTIFSVIPNEPGVAPFTAPGSCQLAAGFVVYGPQTSLVLTLGDGVDIFTLDRAAKTYRLIRERVQVPADTAEYAINASNHRHWEQPVRDFVDECLAGTDGPRAKNFNMRWIGSLVAEAYRILTRGGVFLYPADSRPGYGEGRLRVLYETHPMAFVMEQAGGAASTGRERVLDVVASTTHQRSPLIMGSSDKVHRIVELHLDPAAASRTAPLFGRRGLFRT</sequence>
<protein>
    <recommendedName>
        <fullName evidence="1">Fructose-1,6-bisphosphatase class 1</fullName>
        <shortName evidence="1">FBPase class 1</shortName>
        <ecNumber evidence="1">3.1.3.11</ecNumber>
    </recommendedName>
    <alternativeName>
        <fullName evidence="1">D-fructose-1,6-bisphosphate 1-phosphohydrolase class 1</fullName>
    </alternativeName>
</protein>
<reference key="1">
    <citation type="submission" date="2006-01" db="EMBL/GenBank/DDBJ databases">
        <title>Complete sequence of Rhodopseudomonas palustris HaA2.</title>
        <authorList>
            <consortium name="US DOE Joint Genome Institute"/>
            <person name="Copeland A."/>
            <person name="Lucas S."/>
            <person name="Lapidus A."/>
            <person name="Barry K."/>
            <person name="Detter J.C."/>
            <person name="Glavina T."/>
            <person name="Hammon N."/>
            <person name="Israni S."/>
            <person name="Pitluck S."/>
            <person name="Chain P."/>
            <person name="Malfatti S."/>
            <person name="Shin M."/>
            <person name="Vergez L."/>
            <person name="Schmutz J."/>
            <person name="Larimer F."/>
            <person name="Land M."/>
            <person name="Hauser L."/>
            <person name="Pelletier D.A."/>
            <person name="Kyrpides N."/>
            <person name="Anderson I."/>
            <person name="Oda Y."/>
            <person name="Harwood C.S."/>
            <person name="Richardson P."/>
        </authorList>
    </citation>
    <scope>NUCLEOTIDE SEQUENCE [LARGE SCALE GENOMIC DNA]</scope>
    <source>
        <strain>HaA2</strain>
    </source>
</reference>
<organism>
    <name type="scientific">Rhodopseudomonas palustris (strain HaA2)</name>
    <dbReference type="NCBI Taxonomy" id="316058"/>
    <lineage>
        <taxon>Bacteria</taxon>
        <taxon>Pseudomonadati</taxon>
        <taxon>Pseudomonadota</taxon>
        <taxon>Alphaproteobacteria</taxon>
        <taxon>Hyphomicrobiales</taxon>
        <taxon>Nitrobacteraceae</taxon>
        <taxon>Rhodopseudomonas</taxon>
    </lineage>
</organism>
<gene>
    <name evidence="1" type="primary">fbp</name>
    <name type="ordered locus">RPB_0947</name>
</gene>
<dbReference type="EC" id="3.1.3.11" evidence="1"/>
<dbReference type="EMBL" id="CP000250">
    <property type="protein sequence ID" value="ABD05657.1"/>
    <property type="molecule type" value="Genomic_DNA"/>
</dbReference>
<dbReference type="RefSeq" id="WP_011439846.1">
    <property type="nucleotide sequence ID" value="NC_007778.1"/>
</dbReference>
<dbReference type="SMR" id="Q2J1K3"/>
<dbReference type="STRING" id="316058.RPB_0947"/>
<dbReference type="KEGG" id="rpb:RPB_0947"/>
<dbReference type="eggNOG" id="COG0158">
    <property type="taxonomic scope" value="Bacteria"/>
</dbReference>
<dbReference type="HOGENOM" id="CLU_039977_0_0_5"/>
<dbReference type="OrthoDB" id="9806756at2"/>
<dbReference type="UniPathway" id="UPA00116"/>
<dbReference type="Proteomes" id="UP000008809">
    <property type="component" value="Chromosome"/>
</dbReference>
<dbReference type="GO" id="GO:0005829">
    <property type="term" value="C:cytosol"/>
    <property type="evidence" value="ECO:0007669"/>
    <property type="project" value="TreeGrafter"/>
</dbReference>
<dbReference type="GO" id="GO:0042132">
    <property type="term" value="F:fructose 1,6-bisphosphate 1-phosphatase activity"/>
    <property type="evidence" value="ECO:0007669"/>
    <property type="project" value="UniProtKB-UniRule"/>
</dbReference>
<dbReference type="GO" id="GO:0000287">
    <property type="term" value="F:magnesium ion binding"/>
    <property type="evidence" value="ECO:0007669"/>
    <property type="project" value="UniProtKB-UniRule"/>
</dbReference>
<dbReference type="GO" id="GO:0030388">
    <property type="term" value="P:fructose 1,6-bisphosphate metabolic process"/>
    <property type="evidence" value="ECO:0007669"/>
    <property type="project" value="TreeGrafter"/>
</dbReference>
<dbReference type="GO" id="GO:0006002">
    <property type="term" value="P:fructose 6-phosphate metabolic process"/>
    <property type="evidence" value="ECO:0007669"/>
    <property type="project" value="TreeGrafter"/>
</dbReference>
<dbReference type="GO" id="GO:0006000">
    <property type="term" value="P:fructose metabolic process"/>
    <property type="evidence" value="ECO:0007669"/>
    <property type="project" value="TreeGrafter"/>
</dbReference>
<dbReference type="GO" id="GO:0006094">
    <property type="term" value="P:gluconeogenesis"/>
    <property type="evidence" value="ECO:0007669"/>
    <property type="project" value="UniProtKB-UniRule"/>
</dbReference>
<dbReference type="GO" id="GO:0019253">
    <property type="term" value="P:reductive pentose-phosphate cycle"/>
    <property type="evidence" value="ECO:0007669"/>
    <property type="project" value="UniProtKB-UniRule"/>
</dbReference>
<dbReference type="GO" id="GO:0005986">
    <property type="term" value="P:sucrose biosynthetic process"/>
    <property type="evidence" value="ECO:0007669"/>
    <property type="project" value="TreeGrafter"/>
</dbReference>
<dbReference type="CDD" id="cd00354">
    <property type="entry name" value="FBPase"/>
    <property type="match status" value="1"/>
</dbReference>
<dbReference type="FunFam" id="3.40.190.80:FF:000011">
    <property type="entry name" value="Fructose-1,6-bisphosphatase class 1"/>
    <property type="match status" value="1"/>
</dbReference>
<dbReference type="Gene3D" id="3.40.190.80">
    <property type="match status" value="1"/>
</dbReference>
<dbReference type="Gene3D" id="3.30.540.10">
    <property type="entry name" value="Fructose-1,6-Bisphosphatase, subunit A, domain 1"/>
    <property type="match status" value="1"/>
</dbReference>
<dbReference type="HAMAP" id="MF_01855">
    <property type="entry name" value="FBPase_class1"/>
    <property type="match status" value="1"/>
</dbReference>
<dbReference type="InterPro" id="IPR044015">
    <property type="entry name" value="FBPase_C_dom"/>
</dbReference>
<dbReference type="InterPro" id="IPR000146">
    <property type="entry name" value="FBPase_class-1"/>
</dbReference>
<dbReference type="InterPro" id="IPR033391">
    <property type="entry name" value="FBPase_N"/>
</dbReference>
<dbReference type="InterPro" id="IPR028343">
    <property type="entry name" value="FBPtase"/>
</dbReference>
<dbReference type="InterPro" id="IPR020548">
    <property type="entry name" value="Fructose_bisphosphatase_AS"/>
</dbReference>
<dbReference type="NCBIfam" id="NF006779">
    <property type="entry name" value="PRK09293.1-3"/>
    <property type="match status" value="1"/>
</dbReference>
<dbReference type="NCBIfam" id="NF006780">
    <property type="entry name" value="PRK09293.1-4"/>
    <property type="match status" value="1"/>
</dbReference>
<dbReference type="PANTHER" id="PTHR11556">
    <property type="entry name" value="FRUCTOSE-1,6-BISPHOSPHATASE-RELATED"/>
    <property type="match status" value="1"/>
</dbReference>
<dbReference type="PANTHER" id="PTHR11556:SF35">
    <property type="entry name" value="SEDOHEPTULOSE-1,7-BISPHOSPHATASE, CHLOROPLASTIC"/>
    <property type="match status" value="1"/>
</dbReference>
<dbReference type="Pfam" id="PF00316">
    <property type="entry name" value="FBPase"/>
    <property type="match status" value="1"/>
</dbReference>
<dbReference type="Pfam" id="PF18913">
    <property type="entry name" value="FBPase_C"/>
    <property type="match status" value="1"/>
</dbReference>
<dbReference type="PIRSF" id="PIRSF500210">
    <property type="entry name" value="FBPtase"/>
    <property type="match status" value="1"/>
</dbReference>
<dbReference type="PIRSF" id="PIRSF000904">
    <property type="entry name" value="FBPtase_SBPase"/>
    <property type="match status" value="1"/>
</dbReference>
<dbReference type="PRINTS" id="PR00115">
    <property type="entry name" value="F16BPHPHTASE"/>
</dbReference>
<dbReference type="SUPFAM" id="SSF56655">
    <property type="entry name" value="Carbohydrate phosphatase"/>
    <property type="match status" value="1"/>
</dbReference>
<dbReference type="PROSITE" id="PS00124">
    <property type="entry name" value="FBPASE"/>
    <property type="match status" value="1"/>
</dbReference>